<evidence type="ECO:0000255" key="1">
    <source>
        <dbReference type="HAMAP-Rule" id="MF_01326"/>
    </source>
</evidence>
<evidence type="ECO:0000305" key="2"/>
<accession>B3EP50</accession>
<sequence>MKTGIKQVKLHVRKNDTVLVIAGNDKGKTGKVLRVFPQKNRVIVEGVNIRKRHVRPTQSHPQGAIIEREFPIHASNVKKS</sequence>
<feature type="chain" id="PRO_0000355653" description="Large ribosomal subunit protein uL24">
    <location>
        <begin position="1"/>
        <end position="80"/>
    </location>
</feature>
<comment type="function">
    <text evidence="1">One of two assembly initiator proteins, it binds directly to the 5'-end of the 23S rRNA, where it nucleates assembly of the 50S subunit.</text>
</comment>
<comment type="function">
    <text evidence="1">One of the proteins that surrounds the polypeptide exit tunnel on the outside of the subunit.</text>
</comment>
<comment type="subunit">
    <text evidence="1">Part of the 50S ribosomal subunit.</text>
</comment>
<comment type="similarity">
    <text evidence="1">Belongs to the universal ribosomal protein uL24 family.</text>
</comment>
<protein>
    <recommendedName>
        <fullName evidence="1">Large ribosomal subunit protein uL24</fullName>
    </recommendedName>
    <alternativeName>
        <fullName evidence="2">50S ribosomal protein L24</fullName>
    </alternativeName>
</protein>
<proteinExistence type="inferred from homology"/>
<organism>
    <name type="scientific">Chlorobium phaeobacteroides (strain BS1)</name>
    <dbReference type="NCBI Taxonomy" id="331678"/>
    <lineage>
        <taxon>Bacteria</taxon>
        <taxon>Pseudomonadati</taxon>
        <taxon>Chlorobiota</taxon>
        <taxon>Chlorobiia</taxon>
        <taxon>Chlorobiales</taxon>
        <taxon>Chlorobiaceae</taxon>
        <taxon>Chlorobium/Pelodictyon group</taxon>
        <taxon>Chlorobium</taxon>
    </lineage>
</organism>
<name>RL24_CHLPB</name>
<reference key="1">
    <citation type="submission" date="2008-06" db="EMBL/GenBank/DDBJ databases">
        <title>Complete sequence of Chlorobium phaeobacteroides BS1.</title>
        <authorList>
            <consortium name="US DOE Joint Genome Institute"/>
            <person name="Lucas S."/>
            <person name="Copeland A."/>
            <person name="Lapidus A."/>
            <person name="Glavina del Rio T."/>
            <person name="Dalin E."/>
            <person name="Tice H."/>
            <person name="Bruce D."/>
            <person name="Goodwin L."/>
            <person name="Pitluck S."/>
            <person name="Schmutz J."/>
            <person name="Larimer F."/>
            <person name="Land M."/>
            <person name="Hauser L."/>
            <person name="Kyrpides N."/>
            <person name="Ovchinnikova G."/>
            <person name="Li T."/>
            <person name="Liu Z."/>
            <person name="Zhao F."/>
            <person name="Overmann J."/>
            <person name="Bryant D.A."/>
            <person name="Richardson P."/>
        </authorList>
    </citation>
    <scope>NUCLEOTIDE SEQUENCE [LARGE SCALE GENOMIC DNA]</scope>
    <source>
        <strain>BS1</strain>
    </source>
</reference>
<dbReference type="EMBL" id="CP001101">
    <property type="protein sequence ID" value="ACE05189.1"/>
    <property type="molecule type" value="Genomic_DNA"/>
</dbReference>
<dbReference type="SMR" id="B3EP50"/>
<dbReference type="STRING" id="331678.Cphamn1_2285"/>
<dbReference type="KEGG" id="cpb:Cphamn1_2285"/>
<dbReference type="eggNOG" id="COG0198">
    <property type="taxonomic scope" value="Bacteria"/>
</dbReference>
<dbReference type="HOGENOM" id="CLU_093315_3_0_10"/>
<dbReference type="GO" id="GO:1990904">
    <property type="term" value="C:ribonucleoprotein complex"/>
    <property type="evidence" value="ECO:0007669"/>
    <property type="project" value="UniProtKB-KW"/>
</dbReference>
<dbReference type="GO" id="GO:0005840">
    <property type="term" value="C:ribosome"/>
    <property type="evidence" value="ECO:0007669"/>
    <property type="project" value="UniProtKB-KW"/>
</dbReference>
<dbReference type="GO" id="GO:0019843">
    <property type="term" value="F:rRNA binding"/>
    <property type="evidence" value="ECO:0007669"/>
    <property type="project" value="UniProtKB-UniRule"/>
</dbReference>
<dbReference type="GO" id="GO:0003735">
    <property type="term" value="F:structural constituent of ribosome"/>
    <property type="evidence" value="ECO:0007669"/>
    <property type="project" value="InterPro"/>
</dbReference>
<dbReference type="GO" id="GO:0006412">
    <property type="term" value="P:translation"/>
    <property type="evidence" value="ECO:0007669"/>
    <property type="project" value="UniProtKB-UniRule"/>
</dbReference>
<dbReference type="CDD" id="cd06089">
    <property type="entry name" value="KOW_RPL26"/>
    <property type="match status" value="1"/>
</dbReference>
<dbReference type="Gene3D" id="2.30.30.30">
    <property type="match status" value="1"/>
</dbReference>
<dbReference type="HAMAP" id="MF_01326_B">
    <property type="entry name" value="Ribosomal_uL24_B"/>
    <property type="match status" value="1"/>
</dbReference>
<dbReference type="InterPro" id="IPR005824">
    <property type="entry name" value="KOW"/>
</dbReference>
<dbReference type="InterPro" id="IPR014722">
    <property type="entry name" value="Rib_uL2_dom2"/>
</dbReference>
<dbReference type="InterPro" id="IPR003256">
    <property type="entry name" value="Ribosomal_uL24"/>
</dbReference>
<dbReference type="InterPro" id="IPR005825">
    <property type="entry name" value="Ribosomal_uL24_CS"/>
</dbReference>
<dbReference type="InterPro" id="IPR041988">
    <property type="entry name" value="Ribosomal_uL24_KOW"/>
</dbReference>
<dbReference type="InterPro" id="IPR008991">
    <property type="entry name" value="Translation_prot_SH3-like_sf"/>
</dbReference>
<dbReference type="NCBIfam" id="TIGR01079">
    <property type="entry name" value="rplX_bact"/>
    <property type="match status" value="1"/>
</dbReference>
<dbReference type="PANTHER" id="PTHR12903">
    <property type="entry name" value="MITOCHONDRIAL RIBOSOMAL PROTEIN L24"/>
    <property type="match status" value="1"/>
</dbReference>
<dbReference type="Pfam" id="PF00467">
    <property type="entry name" value="KOW"/>
    <property type="match status" value="1"/>
</dbReference>
<dbReference type="Pfam" id="PF17136">
    <property type="entry name" value="ribosomal_L24"/>
    <property type="match status" value="1"/>
</dbReference>
<dbReference type="SMART" id="SM00739">
    <property type="entry name" value="KOW"/>
    <property type="match status" value="1"/>
</dbReference>
<dbReference type="SUPFAM" id="SSF50104">
    <property type="entry name" value="Translation proteins SH3-like domain"/>
    <property type="match status" value="1"/>
</dbReference>
<dbReference type="PROSITE" id="PS01108">
    <property type="entry name" value="RIBOSOMAL_L24"/>
    <property type="match status" value="1"/>
</dbReference>
<keyword id="KW-0687">Ribonucleoprotein</keyword>
<keyword id="KW-0689">Ribosomal protein</keyword>
<keyword id="KW-0694">RNA-binding</keyword>
<keyword id="KW-0699">rRNA-binding</keyword>
<gene>
    <name evidence="1" type="primary">rplX</name>
    <name type="ordered locus">Cphamn1_2285</name>
</gene>